<comment type="function">
    <text evidence="1">Catalyzes the first step in hexosamine metabolism, converting fructose-6P into glucosamine-6P using glutamine as a nitrogen source.</text>
</comment>
<comment type="catalytic activity">
    <reaction evidence="1">
        <text>D-fructose 6-phosphate + L-glutamine = D-glucosamine 6-phosphate + L-glutamate</text>
        <dbReference type="Rhea" id="RHEA:13237"/>
        <dbReference type="ChEBI" id="CHEBI:29985"/>
        <dbReference type="ChEBI" id="CHEBI:58359"/>
        <dbReference type="ChEBI" id="CHEBI:58725"/>
        <dbReference type="ChEBI" id="CHEBI:61527"/>
        <dbReference type="EC" id="2.6.1.16"/>
    </reaction>
</comment>
<comment type="subunit">
    <text evidence="1">Homodimer.</text>
</comment>
<comment type="subcellular location">
    <subcellularLocation>
        <location evidence="1">Cytoplasm</location>
    </subcellularLocation>
</comment>
<name>GLMS_STRA3</name>
<feature type="initiator methionine" description="Removed" evidence="1">
    <location>
        <position position="1"/>
    </location>
</feature>
<feature type="chain" id="PRO_0000135387" description="Glutamine--fructose-6-phosphate aminotransferase [isomerizing]">
    <location>
        <begin position="2"/>
        <end position="604"/>
    </location>
</feature>
<feature type="domain" description="Glutamine amidotransferase type-2" evidence="1">
    <location>
        <begin position="2"/>
        <end position="218"/>
    </location>
</feature>
<feature type="domain" description="SIS 1" evidence="1">
    <location>
        <begin position="284"/>
        <end position="423"/>
    </location>
</feature>
<feature type="domain" description="SIS 2" evidence="1">
    <location>
        <begin position="456"/>
        <end position="594"/>
    </location>
</feature>
<feature type="active site" description="Nucleophile; for GATase activity" evidence="1">
    <location>
        <position position="2"/>
    </location>
</feature>
<feature type="active site" description="For Fru-6P isomerization activity" evidence="1">
    <location>
        <position position="599"/>
    </location>
</feature>
<keyword id="KW-0032">Aminotransferase</keyword>
<keyword id="KW-0963">Cytoplasm</keyword>
<keyword id="KW-0315">Glutamine amidotransferase</keyword>
<keyword id="KW-0677">Repeat</keyword>
<keyword id="KW-0808">Transferase</keyword>
<evidence type="ECO:0000255" key="1">
    <source>
        <dbReference type="HAMAP-Rule" id="MF_00164"/>
    </source>
</evidence>
<gene>
    <name evidence="1" type="primary">glmS</name>
    <name type="ordered locus">gbs0933</name>
</gene>
<accession>Q8E5P8</accession>
<proteinExistence type="inferred from homology"/>
<protein>
    <recommendedName>
        <fullName evidence="1">Glutamine--fructose-6-phosphate aminotransferase [isomerizing]</fullName>
        <ecNumber evidence="1">2.6.1.16</ecNumber>
    </recommendedName>
    <alternativeName>
        <fullName evidence="1">D-fructose-6-phosphate amidotransferase</fullName>
    </alternativeName>
    <alternativeName>
        <fullName evidence="1">GFAT</fullName>
    </alternativeName>
    <alternativeName>
        <fullName evidence="1">Glucosamine-6-phosphate synthase</fullName>
    </alternativeName>
    <alternativeName>
        <fullName evidence="1">Hexosephosphate aminotransferase</fullName>
    </alternativeName>
    <alternativeName>
        <fullName evidence="1">L-glutamine--D-fructose-6-phosphate amidotransferase</fullName>
    </alternativeName>
</protein>
<organism>
    <name type="scientific">Streptococcus agalactiae serotype III (strain NEM316)</name>
    <dbReference type="NCBI Taxonomy" id="211110"/>
    <lineage>
        <taxon>Bacteria</taxon>
        <taxon>Bacillati</taxon>
        <taxon>Bacillota</taxon>
        <taxon>Bacilli</taxon>
        <taxon>Lactobacillales</taxon>
        <taxon>Streptococcaceae</taxon>
        <taxon>Streptococcus</taxon>
    </lineage>
</organism>
<reference key="1">
    <citation type="journal article" date="2002" name="Mol. Microbiol.">
        <title>Genome sequence of Streptococcus agalactiae, a pathogen causing invasive neonatal disease.</title>
        <authorList>
            <person name="Glaser P."/>
            <person name="Rusniok C."/>
            <person name="Buchrieser C."/>
            <person name="Chevalier F."/>
            <person name="Frangeul L."/>
            <person name="Msadek T."/>
            <person name="Zouine M."/>
            <person name="Couve E."/>
            <person name="Lalioui L."/>
            <person name="Poyart C."/>
            <person name="Trieu-Cuot P."/>
            <person name="Kunst F."/>
        </authorList>
    </citation>
    <scope>NUCLEOTIDE SEQUENCE [LARGE SCALE GENOMIC DNA]</scope>
    <source>
        <strain>NEM316</strain>
    </source>
</reference>
<dbReference type="EC" id="2.6.1.16" evidence="1"/>
<dbReference type="EMBL" id="AL766848">
    <property type="protein sequence ID" value="CAD46592.1"/>
    <property type="molecule type" value="Genomic_DNA"/>
</dbReference>
<dbReference type="RefSeq" id="WP_000334317.1">
    <property type="nucleotide sequence ID" value="NC_004368.1"/>
</dbReference>
<dbReference type="SMR" id="Q8E5P8"/>
<dbReference type="MEROPS" id="C44.A08"/>
<dbReference type="GeneID" id="66885867"/>
<dbReference type="KEGG" id="san:gbs0933"/>
<dbReference type="eggNOG" id="COG0449">
    <property type="taxonomic scope" value="Bacteria"/>
</dbReference>
<dbReference type="HOGENOM" id="CLU_012520_7_1_9"/>
<dbReference type="Proteomes" id="UP000000823">
    <property type="component" value="Chromosome"/>
</dbReference>
<dbReference type="GO" id="GO:0005829">
    <property type="term" value="C:cytosol"/>
    <property type="evidence" value="ECO:0007669"/>
    <property type="project" value="TreeGrafter"/>
</dbReference>
<dbReference type="GO" id="GO:0097367">
    <property type="term" value="F:carbohydrate derivative binding"/>
    <property type="evidence" value="ECO:0007669"/>
    <property type="project" value="InterPro"/>
</dbReference>
<dbReference type="GO" id="GO:0004360">
    <property type="term" value="F:glutamine-fructose-6-phosphate transaminase (isomerizing) activity"/>
    <property type="evidence" value="ECO:0007669"/>
    <property type="project" value="UniProtKB-UniRule"/>
</dbReference>
<dbReference type="GO" id="GO:0005975">
    <property type="term" value="P:carbohydrate metabolic process"/>
    <property type="evidence" value="ECO:0007669"/>
    <property type="project" value="UniProtKB-UniRule"/>
</dbReference>
<dbReference type="GO" id="GO:0006002">
    <property type="term" value="P:fructose 6-phosphate metabolic process"/>
    <property type="evidence" value="ECO:0007669"/>
    <property type="project" value="TreeGrafter"/>
</dbReference>
<dbReference type="GO" id="GO:0006487">
    <property type="term" value="P:protein N-linked glycosylation"/>
    <property type="evidence" value="ECO:0007669"/>
    <property type="project" value="TreeGrafter"/>
</dbReference>
<dbReference type="GO" id="GO:0006047">
    <property type="term" value="P:UDP-N-acetylglucosamine metabolic process"/>
    <property type="evidence" value="ECO:0007669"/>
    <property type="project" value="TreeGrafter"/>
</dbReference>
<dbReference type="CDD" id="cd00714">
    <property type="entry name" value="GFAT"/>
    <property type="match status" value="1"/>
</dbReference>
<dbReference type="CDD" id="cd05008">
    <property type="entry name" value="SIS_GlmS_GlmD_1"/>
    <property type="match status" value="1"/>
</dbReference>
<dbReference type="CDD" id="cd05009">
    <property type="entry name" value="SIS_GlmS_GlmD_2"/>
    <property type="match status" value="1"/>
</dbReference>
<dbReference type="FunFam" id="3.40.50.10490:FF:000001">
    <property type="entry name" value="Glutamine--fructose-6-phosphate aminotransferase [isomerizing]"/>
    <property type="match status" value="1"/>
</dbReference>
<dbReference type="FunFam" id="3.40.50.10490:FF:000022">
    <property type="entry name" value="Glutamine--fructose-6-phosphate aminotransferase [isomerizing]"/>
    <property type="match status" value="1"/>
</dbReference>
<dbReference type="FunFam" id="3.60.20.10:FF:000006">
    <property type="entry name" value="Glutamine--fructose-6-phosphate aminotransferase [isomerizing]"/>
    <property type="match status" value="1"/>
</dbReference>
<dbReference type="Gene3D" id="3.40.50.10490">
    <property type="entry name" value="Glucose-6-phosphate isomerase like protein, domain 1"/>
    <property type="match status" value="2"/>
</dbReference>
<dbReference type="Gene3D" id="3.60.20.10">
    <property type="entry name" value="Glutamine Phosphoribosylpyrophosphate, subunit 1, domain 1"/>
    <property type="match status" value="1"/>
</dbReference>
<dbReference type="HAMAP" id="MF_00164">
    <property type="entry name" value="GlmS"/>
    <property type="match status" value="1"/>
</dbReference>
<dbReference type="InterPro" id="IPR017932">
    <property type="entry name" value="GATase_2_dom"/>
</dbReference>
<dbReference type="InterPro" id="IPR005855">
    <property type="entry name" value="GFAT"/>
</dbReference>
<dbReference type="InterPro" id="IPR047084">
    <property type="entry name" value="GFAT_N"/>
</dbReference>
<dbReference type="InterPro" id="IPR035466">
    <property type="entry name" value="GlmS/AgaS_SIS"/>
</dbReference>
<dbReference type="InterPro" id="IPR035490">
    <property type="entry name" value="GlmS/FrlB_SIS"/>
</dbReference>
<dbReference type="InterPro" id="IPR029055">
    <property type="entry name" value="Ntn_hydrolases_N"/>
</dbReference>
<dbReference type="InterPro" id="IPR001347">
    <property type="entry name" value="SIS_dom"/>
</dbReference>
<dbReference type="InterPro" id="IPR046348">
    <property type="entry name" value="SIS_dom_sf"/>
</dbReference>
<dbReference type="NCBIfam" id="TIGR01135">
    <property type="entry name" value="glmS"/>
    <property type="match status" value="1"/>
</dbReference>
<dbReference type="NCBIfam" id="NF001484">
    <property type="entry name" value="PRK00331.1"/>
    <property type="match status" value="1"/>
</dbReference>
<dbReference type="PANTHER" id="PTHR10937">
    <property type="entry name" value="GLUCOSAMINE--FRUCTOSE-6-PHOSPHATE AMINOTRANSFERASE, ISOMERIZING"/>
    <property type="match status" value="1"/>
</dbReference>
<dbReference type="PANTHER" id="PTHR10937:SF0">
    <property type="entry name" value="GLUTAMINE--FRUCTOSE-6-PHOSPHATE TRANSAMINASE (ISOMERIZING)"/>
    <property type="match status" value="1"/>
</dbReference>
<dbReference type="Pfam" id="PF13522">
    <property type="entry name" value="GATase_6"/>
    <property type="match status" value="1"/>
</dbReference>
<dbReference type="Pfam" id="PF01380">
    <property type="entry name" value="SIS"/>
    <property type="match status" value="2"/>
</dbReference>
<dbReference type="SUPFAM" id="SSF56235">
    <property type="entry name" value="N-terminal nucleophile aminohydrolases (Ntn hydrolases)"/>
    <property type="match status" value="1"/>
</dbReference>
<dbReference type="SUPFAM" id="SSF53697">
    <property type="entry name" value="SIS domain"/>
    <property type="match status" value="1"/>
</dbReference>
<dbReference type="PROSITE" id="PS51278">
    <property type="entry name" value="GATASE_TYPE_2"/>
    <property type="match status" value="1"/>
</dbReference>
<dbReference type="PROSITE" id="PS51464">
    <property type="entry name" value="SIS"/>
    <property type="match status" value="2"/>
</dbReference>
<sequence length="604" mass="65636">MCGIVGVVGNTNATDILIQGLEKLEYRGYDSAGIFVVGDNKSQLVKSVGRIAELQAKVGDSVSGTTGIGHTRWATHGKPTEGNAHPHTSGSGRFVLVHNGVIENYLQIKETYLTKHNLKGETDTEIAIHLVEHFVEEDNLSVLEAFKKALHIIEGSYAFALIDSQDADTIYVAKNKSPLLIGLGNGYNMVCSDAMAMIRETSEYMEIHDKELVIVKKDSVEVQDYDGNVIERGSYTAELDLSDIGKGTYPFYMLKEIDEQPTVMRKLISTYANESGDMNVDSDIIKSVQEADRLYILAAGTSYHAGFAAKTMIEKLTDTPVELGVSSEWGYNMPLLSKKPMFILLSQSGETADSRQVLVKANEMGIPSLTITNVPGSTLSREATYTMLIHAGPEIAVASTKAYTAQVATLAFLAKAVGEANGKAEAKDFDLVHELSIVAQSIEATLSEKDVISEKVEQLLISTRNAFYIGRGNDYYVTMEAALKLKEISYIQTEGFAAGELKHGTISLIEDNTPVIALISADSTIAAHTRGNIQEVVSRGANALIIVEEGLEREGDDIIVNKVHPFLSAISMVIPTQLIAYYASLQRGLDVDKPRNLAKAVTVE</sequence>